<evidence type="ECO:0000305" key="1"/>
<keyword id="KW-1185">Reference proteome</keyword>
<keyword id="KW-0677">Repeat</keyword>
<name>PP232_ARATH</name>
<organism>
    <name type="scientific">Arabidopsis thaliana</name>
    <name type="common">Mouse-ear cress</name>
    <dbReference type="NCBI Taxonomy" id="3702"/>
    <lineage>
        <taxon>Eukaryota</taxon>
        <taxon>Viridiplantae</taxon>
        <taxon>Streptophyta</taxon>
        <taxon>Embryophyta</taxon>
        <taxon>Tracheophyta</taxon>
        <taxon>Spermatophyta</taxon>
        <taxon>Magnoliopsida</taxon>
        <taxon>eudicotyledons</taxon>
        <taxon>Gunneridae</taxon>
        <taxon>Pentapetalae</taxon>
        <taxon>rosids</taxon>
        <taxon>malvids</taxon>
        <taxon>Brassicales</taxon>
        <taxon>Brassicaceae</taxon>
        <taxon>Camelineae</taxon>
        <taxon>Arabidopsis</taxon>
    </lineage>
</organism>
<protein>
    <recommendedName>
        <fullName>Putative pentatricopeptide repeat-containing protein At3g15130</fullName>
    </recommendedName>
</protein>
<feature type="chain" id="PRO_0000356091" description="Putative pentatricopeptide repeat-containing protein At3g15130">
    <location>
        <begin position="1"/>
        <end position="689"/>
    </location>
</feature>
<feature type="repeat" description="PPR 1">
    <location>
        <begin position="5"/>
        <end position="39"/>
    </location>
</feature>
<feature type="repeat" description="PPR 2">
    <location>
        <begin position="40"/>
        <end position="70"/>
    </location>
</feature>
<feature type="repeat" description="PPR 3">
    <location>
        <begin position="71"/>
        <end position="105"/>
    </location>
</feature>
<feature type="repeat" description="PPR 4">
    <location>
        <begin position="106"/>
        <end position="140"/>
    </location>
</feature>
<feature type="repeat" description="PPR 5">
    <location>
        <begin position="141"/>
        <end position="171"/>
    </location>
</feature>
<feature type="repeat" description="PPR 6">
    <location>
        <begin position="172"/>
        <end position="206"/>
    </location>
</feature>
<feature type="repeat" description="PPR 7">
    <location>
        <begin position="209"/>
        <end position="243"/>
    </location>
</feature>
<feature type="repeat" description="PPR 8">
    <location>
        <begin position="246"/>
        <end position="276"/>
    </location>
</feature>
<feature type="repeat" description="PPR 9">
    <location>
        <begin position="277"/>
        <end position="311"/>
    </location>
</feature>
<feature type="repeat" description="PPR 10">
    <location>
        <begin position="312"/>
        <end position="342"/>
    </location>
</feature>
<feature type="repeat" description="PPR 11">
    <location>
        <begin position="347"/>
        <end position="377"/>
    </location>
</feature>
<feature type="repeat" description="PPR 12">
    <location>
        <begin position="378"/>
        <end position="412"/>
    </location>
</feature>
<feature type="repeat" description="PPR 13">
    <location>
        <begin position="413"/>
        <end position="448"/>
    </location>
</feature>
<feature type="repeat" description="PPR 14">
    <location>
        <begin position="449"/>
        <end position="479"/>
    </location>
</feature>
<feature type="region of interest" description="Type E motif">
    <location>
        <begin position="484"/>
        <end position="559"/>
    </location>
</feature>
<feature type="region of interest" description="Type E(+) motif">
    <location>
        <begin position="560"/>
        <end position="590"/>
    </location>
</feature>
<feature type="region of interest" description="Type DYW motif">
    <location>
        <begin position="592"/>
        <end position="689"/>
    </location>
</feature>
<accession>P0C898</accession>
<accession>Q9LIM1</accession>
<proteinExistence type="inferred from homology"/>
<dbReference type="EMBL" id="AP001299">
    <property type="protein sequence ID" value="BAB02568.1"/>
    <property type="status" value="ALT_SEQ"/>
    <property type="molecule type" value="Genomic_DNA"/>
</dbReference>
<dbReference type="EMBL" id="CP002686">
    <property type="protein sequence ID" value="AEE75623.1"/>
    <property type="molecule type" value="Genomic_DNA"/>
</dbReference>
<dbReference type="RefSeq" id="NP_188131.1">
    <property type="nucleotide sequence ID" value="NM_112376.2"/>
</dbReference>
<dbReference type="SMR" id="P0C898"/>
<dbReference type="FunCoup" id="P0C898">
    <property type="interactions" value="187"/>
</dbReference>
<dbReference type="STRING" id="3702.P0C898"/>
<dbReference type="PaxDb" id="3702-AT3G15130.1"/>
<dbReference type="ProteomicsDB" id="249179"/>
<dbReference type="EnsemblPlants" id="AT3G15130.1">
    <property type="protein sequence ID" value="AT3G15130.1"/>
    <property type="gene ID" value="AT3G15130"/>
</dbReference>
<dbReference type="GeneID" id="820744"/>
<dbReference type="Gramene" id="AT3G15130.1">
    <property type="protein sequence ID" value="AT3G15130.1"/>
    <property type="gene ID" value="AT3G15130"/>
</dbReference>
<dbReference type="KEGG" id="ath:AT3G15130"/>
<dbReference type="Araport" id="AT3G15130"/>
<dbReference type="TAIR" id="AT3G15130"/>
<dbReference type="eggNOG" id="KOG4197">
    <property type="taxonomic scope" value="Eukaryota"/>
</dbReference>
<dbReference type="HOGENOM" id="CLU_002706_15_3_1"/>
<dbReference type="InParanoid" id="P0C898"/>
<dbReference type="OMA" id="VNYVMMS"/>
<dbReference type="PhylomeDB" id="P0C898"/>
<dbReference type="PRO" id="PR:P0C898"/>
<dbReference type="Proteomes" id="UP000006548">
    <property type="component" value="Chromosome 3"/>
</dbReference>
<dbReference type="ExpressionAtlas" id="P0C898">
    <property type="expression patterns" value="baseline and differential"/>
</dbReference>
<dbReference type="GO" id="GO:0003723">
    <property type="term" value="F:RNA binding"/>
    <property type="evidence" value="ECO:0007669"/>
    <property type="project" value="InterPro"/>
</dbReference>
<dbReference type="GO" id="GO:0008270">
    <property type="term" value="F:zinc ion binding"/>
    <property type="evidence" value="ECO:0007669"/>
    <property type="project" value="InterPro"/>
</dbReference>
<dbReference type="GO" id="GO:0009451">
    <property type="term" value="P:RNA modification"/>
    <property type="evidence" value="ECO:0007669"/>
    <property type="project" value="InterPro"/>
</dbReference>
<dbReference type="FunFam" id="1.25.40.10:FF:000073">
    <property type="entry name" value="Pentatricopeptide repeat-containing protein chloroplastic"/>
    <property type="match status" value="1"/>
</dbReference>
<dbReference type="FunFam" id="1.25.40.10:FF:002129">
    <property type="entry name" value="Putative pentatricopeptide repeat-containing protein At3g15130"/>
    <property type="match status" value="1"/>
</dbReference>
<dbReference type="FunFam" id="1.25.40.10:FF:002291">
    <property type="entry name" value="Putative pentatricopeptide repeat-containing protein At3g15130"/>
    <property type="match status" value="1"/>
</dbReference>
<dbReference type="Gene3D" id="1.25.40.10">
    <property type="entry name" value="Tetratricopeptide repeat domain"/>
    <property type="match status" value="4"/>
</dbReference>
<dbReference type="InterPro" id="IPR032867">
    <property type="entry name" value="DYW_dom"/>
</dbReference>
<dbReference type="InterPro" id="IPR046848">
    <property type="entry name" value="E_motif"/>
</dbReference>
<dbReference type="InterPro" id="IPR002885">
    <property type="entry name" value="Pentatricopeptide_rpt"/>
</dbReference>
<dbReference type="InterPro" id="IPR046960">
    <property type="entry name" value="PPR_At4g14850-like_plant"/>
</dbReference>
<dbReference type="InterPro" id="IPR011990">
    <property type="entry name" value="TPR-like_helical_dom_sf"/>
</dbReference>
<dbReference type="NCBIfam" id="TIGR00756">
    <property type="entry name" value="PPR"/>
    <property type="match status" value="8"/>
</dbReference>
<dbReference type="PANTHER" id="PTHR47926:SF504">
    <property type="entry name" value="(WILD MALAYSIAN BANANA) HYPOTHETICAL PROTEIN"/>
    <property type="match status" value="1"/>
</dbReference>
<dbReference type="PANTHER" id="PTHR47926">
    <property type="entry name" value="PENTATRICOPEPTIDE REPEAT-CONTAINING PROTEIN"/>
    <property type="match status" value="1"/>
</dbReference>
<dbReference type="Pfam" id="PF14432">
    <property type="entry name" value="DYW_deaminase"/>
    <property type="match status" value="1"/>
</dbReference>
<dbReference type="Pfam" id="PF20431">
    <property type="entry name" value="E_motif"/>
    <property type="match status" value="1"/>
</dbReference>
<dbReference type="Pfam" id="PF01535">
    <property type="entry name" value="PPR"/>
    <property type="match status" value="3"/>
</dbReference>
<dbReference type="Pfam" id="PF13041">
    <property type="entry name" value="PPR_2"/>
    <property type="match status" value="3"/>
</dbReference>
<dbReference type="PROSITE" id="PS51375">
    <property type="entry name" value="PPR"/>
    <property type="match status" value="12"/>
</dbReference>
<comment type="similarity">
    <text evidence="1">Belongs to the PPR family. PCMP-H subfamily.</text>
</comment>
<comment type="sequence caution" evidence="1">
    <conflict type="erroneous gene model prediction">
        <sequence resource="EMBL-CDS" id="BAB02568"/>
    </conflict>
    <text>The predicted gene has been split into 2 genes: At3g15130 and At3g15140.</text>
</comment>
<comment type="online information" name="Pentatricopeptide repeat proteins">
    <link uri="https://ppr.plantenergy.uwa.edu.au"/>
</comment>
<reference key="1">
    <citation type="journal article" date="2000" name="DNA Res.">
        <title>Structural analysis of Arabidopsis thaliana chromosome 3. II. Sequence features of the 4,251,695 bp regions covered by 90 P1, TAC and BAC clones.</title>
        <authorList>
            <person name="Kaneko T."/>
            <person name="Katoh T."/>
            <person name="Sato S."/>
            <person name="Nakamura Y."/>
            <person name="Asamizu E."/>
            <person name="Tabata S."/>
        </authorList>
    </citation>
    <scope>NUCLEOTIDE SEQUENCE [LARGE SCALE GENOMIC DNA]</scope>
    <source>
        <strain>cv. Columbia</strain>
    </source>
</reference>
<reference key="2">
    <citation type="journal article" date="2017" name="Plant J.">
        <title>Araport11: a complete reannotation of the Arabidopsis thaliana reference genome.</title>
        <authorList>
            <person name="Cheng C.Y."/>
            <person name="Krishnakumar V."/>
            <person name="Chan A.P."/>
            <person name="Thibaud-Nissen F."/>
            <person name="Schobel S."/>
            <person name="Town C.D."/>
        </authorList>
    </citation>
    <scope>GENOME REANNOTATION</scope>
    <source>
        <strain>cv. Columbia</strain>
    </source>
</reference>
<reference key="3">
    <citation type="journal article" date="2004" name="Plant Cell">
        <title>Genome-wide analysis of Arabidopsis pentatricopeptide repeat proteins reveals their essential role in organelle biogenesis.</title>
        <authorList>
            <person name="Lurin C."/>
            <person name="Andres C."/>
            <person name="Aubourg S."/>
            <person name="Bellaoui M."/>
            <person name="Bitton F."/>
            <person name="Bruyere C."/>
            <person name="Caboche M."/>
            <person name="Debast C."/>
            <person name="Gualberto J."/>
            <person name="Hoffmann B."/>
            <person name="Lecharny A."/>
            <person name="Le Ret M."/>
            <person name="Martin-Magniette M.-L."/>
            <person name="Mireau H."/>
            <person name="Peeters N."/>
            <person name="Renou J.-P."/>
            <person name="Szurek B."/>
            <person name="Taconnat L."/>
            <person name="Small I."/>
        </authorList>
    </citation>
    <scope>GENE FAMILY</scope>
</reference>
<gene>
    <name type="primary">PCMP-H86</name>
    <name type="ordered locus">At3g15130</name>
    <name type="ORF">F4B12.1</name>
</gene>
<sequence>MIPNQRQNLVSILRVCTRKGLSDQGGQVHCYLLKSGSGLNLITSNYLIDMYCKCREPLMAYKVFDSMPERNVVSWSALMSGHVLNGDLKGSLSLFSEMGRQGIYPNEFTFSTNLKACGLLNALEKGLQIHGFCLKIGFEMMVEVGNSLVDMYSKCGRINEAEKVFRRIVDRSLISWNAMIAGFVHAGYGSKALDTFGMMQEANIKERPDEFTLTSLLKACSSTGMIYAGKQIHGFLVRSGFHCPSSATITGSLVDLYVKCGYLFSARKAFDQIKEKTMISWSSLILGYAQEGEFVEAMGLFKRLQELNSQIDSFALSSIIGVFADFALLRQGKQMQALAVKLPSGLETSVLNSVVDMYLKCGLVDEAEKCFAEMQLKDVISWTVVITGYGKHGLGKKSVRIFYEMLRHNIEPDEVCYLAVLSACSHSGMIKEGEELFSKLLETHGIKPRVEHYACVVDLLGRAGRLKEAKHLIDTMPIKPNVGIWQTLLSLCRVHGDIELGKEVGKILLRIDAKNPANYVMMSNLYGQAGYWNEQGNARELGNIKGLKKEAGMSWVEIEREVHFFRSGEDSHPLTPVIQETLKEAERRLREELGYVYGLKHELHDIDDESKEENLRAHSEKLAIGLALATGGLNQKGKTIRVFKNLRVCVDCHEFIKGLSKITKIAYVVRDAVRFHSFEDGCCSCGDYW</sequence>